<reference key="1">
    <citation type="journal article" date="2002" name="Proc. Natl. Acad. Sci. U.S.A.">
        <title>The Brucella suis genome reveals fundamental similarities between animal and plant pathogens and symbionts.</title>
        <authorList>
            <person name="Paulsen I.T."/>
            <person name="Seshadri R."/>
            <person name="Nelson K.E."/>
            <person name="Eisen J.A."/>
            <person name="Heidelberg J.F."/>
            <person name="Read T.D."/>
            <person name="Dodson R.J."/>
            <person name="Umayam L.A."/>
            <person name="Brinkac L.M."/>
            <person name="Beanan M.J."/>
            <person name="Daugherty S.C."/>
            <person name="DeBoy R.T."/>
            <person name="Durkin A.S."/>
            <person name="Kolonay J.F."/>
            <person name="Madupu R."/>
            <person name="Nelson W.C."/>
            <person name="Ayodeji B."/>
            <person name="Kraul M."/>
            <person name="Shetty J."/>
            <person name="Malek J.A."/>
            <person name="Van Aken S.E."/>
            <person name="Riedmuller S."/>
            <person name="Tettelin H."/>
            <person name="Gill S.R."/>
            <person name="White O."/>
            <person name="Salzberg S.L."/>
            <person name="Hoover D.L."/>
            <person name="Lindler L.E."/>
            <person name="Halling S.M."/>
            <person name="Boyle S.M."/>
            <person name="Fraser C.M."/>
        </authorList>
    </citation>
    <scope>NUCLEOTIDE SEQUENCE [LARGE SCALE GENOMIC DNA]</scope>
    <source>
        <strain>1330</strain>
    </source>
</reference>
<reference key="2">
    <citation type="journal article" date="2011" name="J. Bacteriol.">
        <title>Revised genome sequence of Brucella suis 1330.</title>
        <authorList>
            <person name="Tae H."/>
            <person name="Shallom S."/>
            <person name="Settlage R."/>
            <person name="Preston D."/>
            <person name="Adams L.G."/>
            <person name="Garner H.R."/>
        </authorList>
    </citation>
    <scope>NUCLEOTIDE SEQUENCE [LARGE SCALE GENOMIC DNA]</scope>
    <source>
        <strain>1330</strain>
    </source>
</reference>
<gene>
    <name evidence="1" type="primary">lpxK</name>
    <name type="ordered locus">BRA0216</name>
    <name type="ordered locus">BS1330_II0213</name>
</gene>
<sequence length="341" mass="36782">MASEAPPFWWDEPDWRALALAPAAWIYGRVSGRRLIRAVPPRVSLPVLCVGNFTVGGAGKTPTAIAFARGAIARGMKPGIVSRGYGGNYSGLHLVDPGHDGARHVGDEPLLLARHAAVALSPDRVKAAEYLKSLGCDFIIMDDGFQSARLHADFSLLVVDASRGIGNGRVIPAGPLRAPLTDQMRKTDALLCIGKGNGADFVIRQAARAGRPIYHAQLRPSSSATVAGRRWLAFAGIGNPDKFYESVRQAGGEVVETHSFADHYSFEPDDIRGLVDMARRQGLGLITTAKDHVRLATMPGVPPEFLSKLAVLDVDLEFDRTDALDHILDTVVERFKSRLHG</sequence>
<feature type="chain" id="PRO_0000190915" description="Tetraacyldisaccharide 4'-kinase">
    <location>
        <begin position="1"/>
        <end position="341"/>
    </location>
</feature>
<feature type="binding site" evidence="1">
    <location>
        <begin position="54"/>
        <end position="61"/>
    </location>
    <ligand>
        <name>ATP</name>
        <dbReference type="ChEBI" id="CHEBI:30616"/>
    </ligand>
</feature>
<accession>P65326</accession>
<accession>G0KF54</accession>
<accession>Q8YB72</accession>
<dbReference type="EC" id="2.7.1.130" evidence="1"/>
<dbReference type="EMBL" id="AE014292">
    <property type="protein sequence ID" value="AAN33420.1"/>
    <property type="molecule type" value="Genomic_DNA"/>
</dbReference>
<dbReference type="EMBL" id="CP002998">
    <property type="protein sequence ID" value="AEM19698.1"/>
    <property type="molecule type" value="Genomic_DNA"/>
</dbReference>
<dbReference type="RefSeq" id="WP_002966366.1">
    <property type="nucleotide sequence ID" value="NZ_KN046805.1"/>
</dbReference>
<dbReference type="SMR" id="P65326"/>
<dbReference type="GeneID" id="97535597"/>
<dbReference type="KEGG" id="bms:BRA0216"/>
<dbReference type="KEGG" id="bsi:BS1330_II0213"/>
<dbReference type="PATRIC" id="fig|204722.21.peg.2146"/>
<dbReference type="HOGENOM" id="CLU_038816_0_0_5"/>
<dbReference type="PhylomeDB" id="P65326"/>
<dbReference type="UniPathway" id="UPA00359">
    <property type="reaction ID" value="UER00482"/>
</dbReference>
<dbReference type="Proteomes" id="UP000007104">
    <property type="component" value="Chromosome II"/>
</dbReference>
<dbReference type="GO" id="GO:0005886">
    <property type="term" value="C:plasma membrane"/>
    <property type="evidence" value="ECO:0007669"/>
    <property type="project" value="TreeGrafter"/>
</dbReference>
<dbReference type="GO" id="GO:0005524">
    <property type="term" value="F:ATP binding"/>
    <property type="evidence" value="ECO:0007669"/>
    <property type="project" value="UniProtKB-UniRule"/>
</dbReference>
<dbReference type="GO" id="GO:0009029">
    <property type="term" value="F:tetraacyldisaccharide 4'-kinase activity"/>
    <property type="evidence" value="ECO:0007669"/>
    <property type="project" value="UniProtKB-UniRule"/>
</dbReference>
<dbReference type="GO" id="GO:0009245">
    <property type="term" value="P:lipid A biosynthetic process"/>
    <property type="evidence" value="ECO:0007669"/>
    <property type="project" value="UniProtKB-UniRule"/>
</dbReference>
<dbReference type="GO" id="GO:0009244">
    <property type="term" value="P:lipopolysaccharide core region biosynthetic process"/>
    <property type="evidence" value="ECO:0007669"/>
    <property type="project" value="TreeGrafter"/>
</dbReference>
<dbReference type="HAMAP" id="MF_00409">
    <property type="entry name" value="LpxK"/>
    <property type="match status" value="1"/>
</dbReference>
<dbReference type="InterPro" id="IPR003758">
    <property type="entry name" value="LpxK"/>
</dbReference>
<dbReference type="InterPro" id="IPR027417">
    <property type="entry name" value="P-loop_NTPase"/>
</dbReference>
<dbReference type="NCBIfam" id="TIGR00682">
    <property type="entry name" value="lpxK"/>
    <property type="match status" value="1"/>
</dbReference>
<dbReference type="PANTHER" id="PTHR42724">
    <property type="entry name" value="TETRAACYLDISACCHARIDE 4'-KINASE"/>
    <property type="match status" value="1"/>
</dbReference>
<dbReference type="PANTHER" id="PTHR42724:SF1">
    <property type="entry name" value="TETRAACYLDISACCHARIDE 4'-KINASE, MITOCHONDRIAL-RELATED"/>
    <property type="match status" value="1"/>
</dbReference>
<dbReference type="Pfam" id="PF02606">
    <property type="entry name" value="LpxK"/>
    <property type="match status" value="1"/>
</dbReference>
<dbReference type="SUPFAM" id="SSF52540">
    <property type="entry name" value="P-loop containing nucleoside triphosphate hydrolases"/>
    <property type="match status" value="1"/>
</dbReference>
<name>LPXK_BRUSU</name>
<proteinExistence type="inferred from homology"/>
<evidence type="ECO:0000255" key="1">
    <source>
        <dbReference type="HAMAP-Rule" id="MF_00409"/>
    </source>
</evidence>
<keyword id="KW-0067">ATP-binding</keyword>
<keyword id="KW-0418">Kinase</keyword>
<keyword id="KW-0441">Lipid A biosynthesis</keyword>
<keyword id="KW-0444">Lipid biosynthesis</keyword>
<keyword id="KW-0443">Lipid metabolism</keyword>
<keyword id="KW-0547">Nucleotide-binding</keyword>
<keyword id="KW-0808">Transferase</keyword>
<protein>
    <recommendedName>
        <fullName evidence="1">Tetraacyldisaccharide 4'-kinase</fullName>
        <ecNumber evidence="1">2.7.1.130</ecNumber>
    </recommendedName>
    <alternativeName>
        <fullName evidence="1">Lipid A 4'-kinase</fullName>
    </alternativeName>
</protein>
<comment type="function">
    <text evidence="1">Transfers the gamma-phosphate of ATP to the 4'-position of a tetraacyldisaccharide 1-phosphate intermediate (termed DS-1-P) to form tetraacyldisaccharide 1,4'-bis-phosphate (lipid IVA).</text>
</comment>
<comment type="catalytic activity">
    <reaction evidence="1">
        <text>a lipid A disaccharide + ATP = a lipid IVA + ADP + H(+)</text>
        <dbReference type="Rhea" id="RHEA:67840"/>
        <dbReference type="ChEBI" id="CHEBI:15378"/>
        <dbReference type="ChEBI" id="CHEBI:30616"/>
        <dbReference type="ChEBI" id="CHEBI:176343"/>
        <dbReference type="ChEBI" id="CHEBI:176425"/>
        <dbReference type="ChEBI" id="CHEBI:456216"/>
        <dbReference type="EC" id="2.7.1.130"/>
    </reaction>
</comment>
<comment type="pathway">
    <text evidence="1">Glycolipid biosynthesis; lipid IV(A) biosynthesis; lipid IV(A) from (3R)-3-hydroxytetradecanoyl-[acyl-carrier-protein] and UDP-N-acetyl-alpha-D-glucosamine: step 6/6.</text>
</comment>
<comment type="similarity">
    <text evidence="1">Belongs to the LpxK family.</text>
</comment>
<organism>
    <name type="scientific">Brucella suis biovar 1 (strain 1330)</name>
    <dbReference type="NCBI Taxonomy" id="204722"/>
    <lineage>
        <taxon>Bacteria</taxon>
        <taxon>Pseudomonadati</taxon>
        <taxon>Pseudomonadota</taxon>
        <taxon>Alphaproteobacteria</taxon>
        <taxon>Hyphomicrobiales</taxon>
        <taxon>Brucellaceae</taxon>
        <taxon>Brucella/Ochrobactrum group</taxon>
        <taxon>Brucella</taxon>
    </lineage>
</organism>